<organism>
    <name type="scientific">Pseudomonas fluorescens (strain ATCC BAA-477 / NRRL B-23932 / Pf-5)</name>
    <dbReference type="NCBI Taxonomy" id="220664"/>
    <lineage>
        <taxon>Bacteria</taxon>
        <taxon>Pseudomonadati</taxon>
        <taxon>Pseudomonadota</taxon>
        <taxon>Gammaproteobacteria</taxon>
        <taxon>Pseudomonadales</taxon>
        <taxon>Pseudomonadaceae</taxon>
        <taxon>Pseudomonas</taxon>
    </lineage>
</organism>
<proteinExistence type="evidence at protein level"/>
<accession>Q4KCY5</accession>
<keyword id="KW-0002">3D-structure</keyword>
<keyword id="KW-0045">Antibiotic biosynthesis</keyword>
<keyword id="KW-0067">ATP-binding</keyword>
<keyword id="KW-0436">Ligase</keyword>
<keyword id="KW-0547">Nucleotide-binding</keyword>
<reference key="1">
    <citation type="journal article" date="2005" name="Nat. Biotechnol.">
        <title>Complete genome sequence of the plant commensal Pseudomonas fluorescens Pf-5.</title>
        <authorList>
            <person name="Paulsen I.T."/>
            <person name="Press C.M."/>
            <person name="Ravel J."/>
            <person name="Kobayashi D.Y."/>
            <person name="Myers G.S.A."/>
            <person name="Mavrodi D.V."/>
            <person name="DeBoy R.T."/>
            <person name="Seshadri R."/>
            <person name="Ren Q."/>
            <person name="Madupu R."/>
            <person name="Dodson R.J."/>
            <person name="Durkin A.S."/>
            <person name="Brinkac L.M."/>
            <person name="Daugherty S.C."/>
            <person name="Sullivan S.A."/>
            <person name="Rosovitz M.J."/>
            <person name="Gwinn M.L."/>
            <person name="Zhou L."/>
            <person name="Schneider D.J."/>
            <person name="Cartinhour S.W."/>
            <person name="Nelson W.C."/>
            <person name="Weidman J."/>
            <person name="Watkins K."/>
            <person name="Tran K."/>
            <person name="Khouri H."/>
            <person name="Pierson E.A."/>
            <person name="Pierson L.S. III"/>
            <person name="Thomashow L.S."/>
            <person name="Loper J.E."/>
        </authorList>
    </citation>
    <scope>NUCLEOTIDE SEQUENCE [LARGE SCALE GENOMIC DNA]</scope>
    <source>
        <strain>ATCC BAA-477 / NRRL B-23932 / Pf-5</strain>
    </source>
</reference>
<reference key="2">
    <citation type="journal article" date="2002" name="Chem. Biol.">
        <title>Conversion of L-proline to pyrrolyl-2-carboxyl-S-PCP during undecylprodigiosin and pyoluteorin biosynthesis.</title>
        <authorList>
            <person name="Thomas M.G."/>
            <person name="Burkart M.D."/>
            <person name="Walsh C.T."/>
        </authorList>
    </citation>
    <scope>FUNCTION</scope>
    <scope>CATALYTIC ACTIVITY</scope>
    <source>
        <strain>ATCC BAA-477 / NRRL B-23932 / Pf-5</strain>
    </source>
</reference>
<protein>
    <recommendedName>
        <fullName evidence="3">L-proline--[L-prolyl-carrier protein] ligase</fullName>
        <ecNumber evidence="1">6.2.1.53</ecNumber>
    </recommendedName>
    <alternativeName>
        <fullName evidence="2">L-prolyl-AMP ligase</fullName>
    </alternativeName>
</protein>
<feature type="chain" id="PRO_0000448663" description="L-proline--[L-prolyl-carrier protein] ligase">
    <location>
        <begin position="1"/>
        <end position="498"/>
    </location>
</feature>
<feature type="helix" evidence="5">
    <location>
        <begin position="4"/>
        <end position="14"/>
    </location>
</feature>
<feature type="strand" evidence="5">
    <location>
        <begin position="18"/>
        <end position="22"/>
    </location>
</feature>
<feature type="strand" evidence="5">
    <location>
        <begin position="27"/>
        <end position="29"/>
    </location>
</feature>
<feature type="helix" evidence="5">
    <location>
        <begin position="30"/>
        <end position="47"/>
    </location>
</feature>
<feature type="strand" evidence="5">
    <location>
        <begin position="54"/>
        <end position="57"/>
    </location>
</feature>
<feature type="helix" evidence="5">
    <location>
        <begin position="63"/>
        <end position="74"/>
    </location>
</feature>
<feature type="strand" evidence="5">
    <location>
        <begin position="78"/>
        <end position="81"/>
    </location>
</feature>
<feature type="helix" evidence="5">
    <location>
        <begin position="88"/>
        <end position="98"/>
    </location>
</feature>
<feature type="strand" evidence="5">
    <location>
        <begin position="101"/>
        <end position="105"/>
    </location>
</feature>
<feature type="turn" evidence="5">
    <location>
        <begin position="107"/>
        <end position="109"/>
    </location>
</feature>
<feature type="helix" evidence="5">
    <location>
        <begin position="110"/>
        <end position="115"/>
    </location>
</feature>
<feature type="turn" evidence="5">
    <location>
        <begin position="117"/>
        <end position="120"/>
    </location>
</feature>
<feature type="strand" evidence="5">
    <location>
        <begin position="121"/>
        <end position="127"/>
    </location>
</feature>
<feature type="helix" evidence="5">
    <location>
        <begin position="135"/>
        <end position="137"/>
    </location>
</feature>
<feature type="strand" evidence="5">
    <location>
        <begin position="154"/>
        <end position="161"/>
    </location>
</feature>
<feature type="strand" evidence="5">
    <location>
        <begin position="169"/>
        <end position="174"/>
    </location>
</feature>
<feature type="helix" evidence="5">
    <location>
        <begin position="175"/>
        <end position="189"/>
    </location>
</feature>
<feature type="strand" evidence="5">
    <location>
        <begin position="196"/>
        <end position="199"/>
    </location>
</feature>
<feature type="helix" evidence="5">
    <location>
        <begin position="207"/>
        <end position="217"/>
    </location>
</feature>
<feature type="strand" evidence="5">
    <location>
        <begin position="221"/>
        <end position="224"/>
    </location>
</feature>
<feature type="helix" evidence="5">
    <location>
        <begin position="227"/>
        <end position="229"/>
    </location>
</feature>
<feature type="helix" evidence="5">
    <location>
        <begin position="233"/>
        <end position="242"/>
    </location>
</feature>
<feature type="strand" evidence="5">
    <location>
        <begin position="246"/>
        <end position="250"/>
    </location>
</feature>
<feature type="helix" evidence="5">
    <location>
        <begin position="252"/>
        <end position="261"/>
    </location>
</feature>
<feature type="turn" evidence="5">
    <location>
        <begin position="264"/>
        <end position="266"/>
    </location>
</feature>
<feature type="strand" evidence="5">
    <location>
        <begin position="274"/>
        <end position="277"/>
    </location>
</feature>
<feature type="helix" evidence="5">
    <location>
        <begin position="284"/>
        <end position="293"/>
    </location>
</feature>
<feature type="turn" evidence="5">
    <location>
        <begin position="294"/>
        <end position="296"/>
    </location>
</feature>
<feature type="strand" evidence="5">
    <location>
        <begin position="297"/>
        <end position="303"/>
    </location>
</feature>
<feature type="helix" evidence="5">
    <location>
        <begin position="306"/>
        <end position="308"/>
    </location>
</feature>
<feature type="strand" evidence="5">
    <location>
        <begin position="312"/>
        <end position="316"/>
    </location>
</feature>
<feature type="strand" evidence="5">
    <location>
        <begin position="330"/>
        <end position="332"/>
    </location>
</feature>
<feature type="strand" evidence="5">
    <location>
        <begin position="337"/>
        <end position="341"/>
    </location>
</feature>
<feature type="strand" evidence="6">
    <location>
        <begin position="345"/>
        <end position="347"/>
    </location>
</feature>
<feature type="strand" evidence="5">
    <location>
        <begin position="354"/>
        <end position="360"/>
    </location>
</feature>
<feature type="strand" evidence="5">
    <location>
        <begin position="365"/>
        <end position="367"/>
    </location>
</feature>
<feature type="strand" evidence="5">
    <location>
        <begin position="375"/>
        <end position="385"/>
    </location>
</feature>
<feature type="strand" evidence="5">
    <location>
        <begin position="391"/>
        <end position="403"/>
    </location>
</feature>
<feature type="strand" evidence="5">
    <location>
        <begin position="406"/>
        <end position="409"/>
    </location>
</feature>
<feature type="helix" evidence="5">
    <location>
        <begin position="410"/>
        <end position="418"/>
    </location>
</feature>
<feature type="strand" evidence="5">
    <location>
        <begin position="424"/>
        <end position="433"/>
    </location>
</feature>
<feature type="helix" evidence="5">
    <location>
        <begin position="434"/>
        <end position="436"/>
    </location>
</feature>
<feature type="strand" evidence="5">
    <location>
        <begin position="438"/>
        <end position="444"/>
    </location>
</feature>
<feature type="helix" evidence="5">
    <location>
        <begin position="453"/>
        <end position="461"/>
    </location>
</feature>
<feature type="helix" evidence="5">
    <location>
        <begin position="466"/>
        <end position="468"/>
    </location>
</feature>
<feature type="strand" evidence="5">
    <location>
        <begin position="471"/>
        <end position="475"/>
    </location>
</feature>
<feature type="strand" evidence="5">
    <location>
        <begin position="485"/>
        <end position="487"/>
    </location>
</feature>
<feature type="helix" evidence="5">
    <location>
        <begin position="489"/>
        <end position="498"/>
    </location>
</feature>
<comment type="function">
    <text evidence="1">Involved in the biosynthesis of pyoluteorin. Catalyzes the conversion of L-proline to L-prolyl-AMP and the transfer of the L-prolyl group to acyl carrier protein PltL.</text>
</comment>
<comment type="catalytic activity">
    <reaction evidence="1">
        <text>holo-[peptidyl-carrier protein] + L-proline + ATP = L-prolyl-[peptidyl-carrier protein] + AMP + diphosphate</text>
        <dbReference type="Rhea" id="RHEA:11656"/>
        <dbReference type="Rhea" id="RHEA-COMP:11480"/>
        <dbReference type="Rhea" id="RHEA-COMP:14109"/>
        <dbReference type="ChEBI" id="CHEBI:30616"/>
        <dbReference type="ChEBI" id="CHEBI:33019"/>
        <dbReference type="ChEBI" id="CHEBI:60039"/>
        <dbReference type="ChEBI" id="CHEBI:64479"/>
        <dbReference type="ChEBI" id="CHEBI:138622"/>
        <dbReference type="ChEBI" id="CHEBI:456215"/>
        <dbReference type="EC" id="6.2.1.53"/>
    </reaction>
</comment>
<comment type="similarity">
    <text evidence="3">Belongs to the ATP-dependent AMP-binding enzyme family.</text>
</comment>
<name>PLTF_PSEF5</name>
<evidence type="ECO:0000269" key="1">
    <source>
    </source>
</evidence>
<evidence type="ECO:0000303" key="2">
    <source>
    </source>
</evidence>
<evidence type="ECO:0000305" key="3"/>
<evidence type="ECO:0000312" key="4">
    <source>
        <dbReference type="EMBL" id="AAY92064.1"/>
    </source>
</evidence>
<evidence type="ECO:0007829" key="5">
    <source>
        <dbReference type="PDB" id="6O6E"/>
    </source>
</evidence>
<evidence type="ECO:0007829" key="6">
    <source>
        <dbReference type="PDB" id="7THQ"/>
    </source>
</evidence>
<gene>
    <name evidence="4" type="primary">pltF</name>
    <name evidence="4" type="ordered locus">PFL_2792</name>
</gene>
<dbReference type="EC" id="6.2.1.53" evidence="1"/>
<dbReference type="EMBL" id="CP000076">
    <property type="protein sequence ID" value="AAY92064.1"/>
    <property type="molecule type" value="Genomic_DNA"/>
</dbReference>
<dbReference type="RefSeq" id="WP_011061084.1">
    <property type="nucleotide sequence ID" value="NC_004129.6"/>
</dbReference>
<dbReference type="PDB" id="6O6E">
    <property type="method" value="X-ray"/>
    <property type="resolution" value="2.14 A"/>
    <property type="chains" value="B=1-498"/>
</dbReference>
<dbReference type="PDB" id="7THQ">
    <property type="method" value="X-ray"/>
    <property type="resolution" value="2.46 A"/>
    <property type="chains" value="A/B=1-498"/>
</dbReference>
<dbReference type="PDBsum" id="6O6E"/>
<dbReference type="PDBsum" id="7THQ"/>
<dbReference type="SMR" id="Q4KCY5"/>
<dbReference type="STRING" id="220664.PFL_2792"/>
<dbReference type="DNASU" id="3478039"/>
<dbReference type="KEGG" id="pfl:PFL_2792"/>
<dbReference type="PATRIC" id="fig|220664.5.peg.2848"/>
<dbReference type="eggNOG" id="COG1020">
    <property type="taxonomic scope" value="Bacteria"/>
</dbReference>
<dbReference type="HOGENOM" id="CLU_000022_2_12_6"/>
<dbReference type="BioCyc" id="MetaCyc:MONOMER-20313"/>
<dbReference type="BRENDA" id="6.2.1.53">
    <property type="organism ID" value="5121"/>
</dbReference>
<dbReference type="Proteomes" id="UP000008540">
    <property type="component" value="Chromosome"/>
</dbReference>
<dbReference type="GO" id="GO:0005737">
    <property type="term" value="C:cytoplasm"/>
    <property type="evidence" value="ECO:0007669"/>
    <property type="project" value="TreeGrafter"/>
</dbReference>
<dbReference type="GO" id="GO:0005524">
    <property type="term" value="F:ATP binding"/>
    <property type="evidence" value="ECO:0007669"/>
    <property type="project" value="UniProtKB-KW"/>
</dbReference>
<dbReference type="GO" id="GO:0016874">
    <property type="term" value="F:ligase activity"/>
    <property type="evidence" value="ECO:0007669"/>
    <property type="project" value="UniProtKB-KW"/>
</dbReference>
<dbReference type="GO" id="GO:0031177">
    <property type="term" value="F:phosphopantetheine binding"/>
    <property type="evidence" value="ECO:0007669"/>
    <property type="project" value="TreeGrafter"/>
</dbReference>
<dbReference type="GO" id="GO:0043041">
    <property type="term" value="P:amino acid activation for nonribosomal peptide biosynthetic process"/>
    <property type="evidence" value="ECO:0007669"/>
    <property type="project" value="TreeGrafter"/>
</dbReference>
<dbReference type="GO" id="GO:0017000">
    <property type="term" value="P:antibiotic biosynthetic process"/>
    <property type="evidence" value="ECO:0007669"/>
    <property type="project" value="UniProtKB-KW"/>
</dbReference>
<dbReference type="GO" id="GO:0044550">
    <property type="term" value="P:secondary metabolite biosynthetic process"/>
    <property type="evidence" value="ECO:0007669"/>
    <property type="project" value="TreeGrafter"/>
</dbReference>
<dbReference type="Gene3D" id="3.30.300.30">
    <property type="match status" value="1"/>
</dbReference>
<dbReference type="Gene3D" id="3.40.50.12780">
    <property type="entry name" value="N-terminal domain of ligase-like"/>
    <property type="match status" value="1"/>
</dbReference>
<dbReference type="InterPro" id="IPR010071">
    <property type="entry name" value="AA_adenyl_dom"/>
</dbReference>
<dbReference type="InterPro" id="IPR025110">
    <property type="entry name" value="AMP-bd_C"/>
</dbReference>
<dbReference type="InterPro" id="IPR045851">
    <property type="entry name" value="AMP-bd_C_sf"/>
</dbReference>
<dbReference type="InterPro" id="IPR020459">
    <property type="entry name" value="AMP-binding"/>
</dbReference>
<dbReference type="InterPro" id="IPR020845">
    <property type="entry name" value="AMP-binding_CS"/>
</dbReference>
<dbReference type="InterPro" id="IPR000873">
    <property type="entry name" value="AMP-dep_synth/lig_dom"/>
</dbReference>
<dbReference type="InterPro" id="IPR042099">
    <property type="entry name" value="ANL_N_sf"/>
</dbReference>
<dbReference type="NCBIfam" id="TIGR01733">
    <property type="entry name" value="AA-adenyl-dom"/>
    <property type="match status" value="1"/>
</dbReference>
<dbReference type="PANTHER" id="PTHR45527:SF1">
    <property type="entry name" value="FATTY ACID SYNTHASE"/>
    <property type="match status" value="1"/>
</dbReference>
<dbReference type="PANTHER" id="PTHR45527">
    <property type="entry name" value="NONRIBOSOMAL PEPTIDE SYNTHETASE"/>
    <property type="match status" value="1"/>
</dbReference>
<dbReference type="Pfam" id="PF00501">
    <property type="entry name" value="AMP-binding"/>
    <property type="match status" value="1"/>
</dbReference>
<dbReference type="Pfam" id="PF13193">
    <property type="entry name" value="AMP-binding_C"/>
    <property type="match status" value="1"/>
</dbReference>
<dbReference type="PRINTS" id="PR00154">
    <property type="entry name" value="AMPBINDING"/>
</dbReference>
<dbReference type="SUPFAM" id="SSF56801">
    <property type="entry name" value="Acetyl-CoA synthetase-like"/>
    <property type="match status" value="1"/>
</dbReference>
<dbReference type="PROSITE" id="PS00455">
    <property type="entry name" value="AMP_BINDING"/>
    <property type="match status" value="1"/>
</dbReference>
<sequence length="498" mass="54537">MKLLHERMMHSLARYPRQTAVVDEQDALSYEALELRIREFVAMLCALGVGQGQRILLWAHKSVDLVAVMQAALRLGVVYVPVDPLSPVSRLEKIAGDSQAVLVLCTAARLEELAGSALAQVRSVVLDDPASAGYWRNIDTGSSVVPTLAIQPDDLAYILYTSGSTGVPKGVALSHGNALAFVDWACERYCFQPGERFANHAPLHFDLSVLDIYCALNVGATVCLVPESIAFSPRLLTDFIRQHEISIWYSVPSVLMMMMQDGDLLSDIQDTLRVLLFAGEPFPVKHLRDLRAAYADVRLANLFGPTETNVCTAFEVGAIDPERVLPVPIGTAASGNQVWAQKPDGSRCAVGEEGELVVQGPTVMLGYFAKPAQEGPYKTGDMVRQRPDGNYEYLGRRDDMLKVRGNRIERGEVEAALLAHPQVSEAAVLVVGEGMNAQLWGVLVAHTRDALSLIDLKRHCAQRLPRYMIIDKVLCLDALPRNANGKVDRFALARQVEG</sequence>